<evidence type="ECO:0000255" key="1">
    <source>
        <dbReference type="HAMAP-Rule" id="MF_00081"/>
    </source>
</evidence>
<proteinExistence type="inferred from homology"/>
<feature type="chain" id="PRO_0000182533" description="Heat-inducible transcription repressor HrcA">
    <location>
        <begin position="1"/>
        <end position="325"/>
    </location>
</feature>
<sequence length="325" mass="37204">MITKRQLSILNAIVEDYVDFGQPIGSKTLIHRHHLDVSPATIRNEMKQLEEMHFIEKTHTSSGRVPSESGIRYYVNRLLEQTSHQSQNKIQRLNQLLIENHYDSSTALTNFAHELSMKSQYATLVVRPNHKQDVINDIHLIRANNHLIILVMVFSSGHVENIHFVSHAQLNNINLNKIANFLTEHFSFNRKVLTQNIESYFSQKEELLLANEVVEMINLQIGNQSNSIYMGGKVKLIDALNESNVSSIQPILQYIESNKITELLEDISTSQINVRIGKEIDDSLSDISIVTSQYHFDESLKGQIAVIGPTAMHYQNVIQLLNRIW</sequence>
<accession>Q5HNW4</accession>
<comment type="function">
    <text evidence="1">Negative regulator of class I heat shock genes (grpE-dnaK-dnaJ and groELS operons). Prevents heat-shock induction of these operons.</text>
</comment>
<comment type="similarity">
    <text evidence="1">Belongs to the HrcA family.</text>
</comment>
<reference key="1">
    <citation type="journal article" date="2005" name="J. Bacteriol.">
        <title>Insights on evolution of virulence and resistance from the complete genome analysis of an early methicillin-resistant Staphylococcus aureus strain and a biofilm-producing methicillin-resistant Staphylococcus epidermidis strain.</title>
        <authorList>
            <person name="Gill S.R."/>
            <person name="Fouts D.E."/>
            <person name="Archer G.L."/>
            <person name="Mongodin E.F."/>
            <person name="DeBoy R.T."/>
            <person name="Ravel J."/>
            <person name="Paulsen I.T."/>
            <person name="Kolonay J.F."/>
            <person name="Brinkac L.M."/>
            <person name="Beanan M.J."/>
            <person name="Dodson R.J."/>
            <person name="Daugherty S.C."/>
            <person name="Madupu R."/>
            <person name="Angiuoli S.V."/>
            <person name="Durkin A.S."/>
            <person name="Haft D.H."/>
            <person name="Vamathevan J.J."/>
            <person name="Khouri H."/>
            <person name="Utterback T.R."/>
            <person name="Lee C."/>
            <person name="Dimitrov G."/>
            <person name="Jiang L."/>
            <person name="Qin H."/>
            <person name="Weidman J."/>
            <person name="Tran K."/>
            <person name="Kang K.H."/>
            <person name="Hance I.R."/>
            <person name="Nelson K.E."/>
            <person name="Fraser C.M."/>
        </authorList>
    </citation>
    <scope>NUCLEOTIDE SEQUENCE [LARGE SCALE GENOMIC DNA]</scope>
    <source>
        <strain>ATCC 35984 / DSM 28319 / BCRC 17069 / CCUG 31568 / BM 3577 / RP62A</strain>
    </source>
</reference>
<gene>
    <name evidence="1" type="primary">hrcA</name>
    <name type="ordered locus">SERP1150</name>
</gene>
<protein>
    <recommendedName>
        <fullName evidence="1">Heat-inducible transcription repressor HrcA</fullName>
    </recommendedName>
</protein>
<keyword id="KW-1185">Reference proteome</keyword>
<keyword id="KW-0678">Repressor</keyword>
<keyword id="KW-0346">Stress response</keyword>
<keyword id="KW-0804">Transcription</keyword>
<keyword id="KW-0805">Transcription regulation</keyword>
<organism>
    <name type="scientific">Staphylococcus epidermidis (strain ATCC 35984 / DSM 28319 / BCRC 17069 / CCUG 31568 / BM 3577 / RP62A)</name>
    <dbReference type="NCBI Taxonomy" id="176279"/>
    <lineage>
        <taxon>Bacteria</taxon>
        <taxon>Bacillati</taxon>
        <taxon>Bacillota</taxon>
        <taxon>Bacilli</taxon>
        <taxon>Bacillales</taxon>
        <taxon>Staphylococcaceae</taxon>
        <taxon>Staphylococcus</taxon>
    </lineage>
</organism>
<dbReference type="EMBL" id="CP000029">
    <property type="protein sequence ID" value="AAW54485.1"/>
    <property type="molecule type" value="Genomic_DNA"/>
</dbReference>
<dbReference type="RefSeq" id="WP_001831038.1">
    <property type="nucleotide sequence ID" value="NC_002976.3"/>
</dbReference>
<dbReference type="SMR" id="Q5HNW4"/>
<dbReference type="STRING" id="176279.SERP1150"/>
<dbReference type="GeneID" id="50018615"/>
<dbReference type="KEGG" id="ser:SERP1150"/>
<dbReference type="eggNOG" id="COG1420">
    <property type="taxonomic scope" value="Bacteria"/>
</dbReference>
<dbReference type="HOGENOM" id="CLU_050019_1_0_9"/>
<dbReference type="Proteomes" id="UP000000531">
    <property type="component" value="Chromosome"/>
</dbReference>
<dbReference type="GO" id="GO:0003677">
    <property type="term" value="F:DNA binding"/>
    <property type="evidence" value="ECO:0007669"/>
    <property type="project" value="InterPro"/>
</dbReference>
<dbReference type="GO" id="GO:0045892">
    <property type="term" value="P:negative regulation of DNA-templated transcription"/>
    <property type="evidence" value="ECO:0007669"/>
    <property type="project" value="UniProtKB-UniRule"/>
</dbReference>
<dbReference type="Gene3D" id="3.30.450.40">
    <property type="match status" value="1"/>
</dbReference>
<dbReference type="Gene3D" id="3.30.390.60">
    <property type="entry name" value="Heat-inducible transcription repressor hrca homolog, domain 3"/>
    <property type="match status" value="1"/>
</dbReference>
<dbReference type="Gene3D" id="1.10.10.10">
    <property type="entry name" value="Winged helix-like DNA-binding domain superfamily/Winged helix DNA-binding domain"/>
    <property type="match status" value="1"/>
</dbReference>
<dbReference type="HAMAP" id="MF_00081">
    <property type="entry name" value="HrcA"/>
    <property type="match status" value="1"/>
</dbReference>
<dbReference type="InterPro" id="IPR029016">
    <property type="entry name" value="GAF-like_dom_sf"/>
</dbReference>
<dbReference type="InterPro" id="IPR002571">
    <property type="entry name" value="HrcA"/>
</dbReference>
<dbReference type="InterPro" id="IPR021153">
    <property type="entry name" value="HrcA_C"/>
</dbReference>
<dbReference type="InterPro" id="IPR036388">
    <property type="entry name" value="WH-like_DNA-bd_sf"/>
</dbReference>
<dbReference type="InterPro" id="IPR036390">
    <property type="entry name" value="WH_DNA-bd_sf"/>
</dbReference>
<dbReference type="InterPro" id="IPR023120">
    <property type="entry name" value="WHTH_transcript_rep_HrcA_IDD"/>
</dbReference>
<dbReference type="NCBIfam" id="TIGR00331">
    <property type="entry name" value="hrcA"/>
    <property type="match status" value="1"/>
</dbReference>
<dbReference type="PANTHER" id="PTHR34824">
    <property type="entry name" value="HEAT-INDUCIBLE TRANSCRIPTION REPRESSOR HRCA"/>
    <property type="match status" value="1"/>
</dbReference>
<dbReference type="PANTHER" id="PTHR34824:SF1">
    <property type="entry name" value="HEAT-INDUCIBLE TRANSCRIPTION REPRESSOR HRCA"/>
    <property type="match status" value="1"/>
</dbReference>
<dbReference type="Pfam" id="PF01628">
    <property type="entry name" value="HrcA"/>
    <property type="match status" value="1"/>
</dbReference>
<dbReference type="PIRSF" id="PIRSF005485">
    <property type="entry name" value="HrcA"/>
    <property type="match status" value="1"/>
</dbReference>
<dbReference type="SUPFAM" id="SSF55781">
    <property type="entry name" value="GAF domain-like"/>
    <property type="match status" value="1"/>
</dbReference>
<dbReference type="SUPFAM" id="SSF46785">
    <property type="entry name" value="Winged helix' DNA-binding domain"/>
    <property type="match status" value="1"/>
</dbReference>
<name>HRCA_STAEQ</name>